<feature type="chain" id="PRO_0000174910" description="Co-chaperonin GroES">
    <location>
        <begin position="1"/>
        <end position="97"/>
    </location>
</feature>
<organism>
    <name type="scientific">Yersinia pestis</name>
    <dbReference type="NCBI Taxonomy" id="632"/>
    <lineage>
        <taxon>Bacteria</taxon>
        <taxon>Pseudomonadati</taxon>
        <taxon>Pseudomonadota</taxon>
        <taxon>Gammaproteobacteria</taxon>
        <taxon>Enterobacterales</taxon>
        <taxon>Yersiniaceae</taxon>
        <taxon>Yersinia</taxon>
    </lineage>
</organism>
<protein>
    <recommendedName>
        <fullName evidence="1">Co-chaperonin GroES</fullName>
    </recommendedName>
    <alternativeName>
        <fullName evidence="1">10 kDa chaperonin</fullName>
    </alternativeName>
    <alternativeName>
        <fullName evidence="1">Chaperonin-10</fullName>
        <shortName evidence="1">Cpn10</shortName>
    </alternativeName>
</protein>
<dbReference type="EMBL" id="AL590842">
    <property type="protein sequence ID" value="CAL19032.1"/>
    <property type="molecule type" value="Genomic_DNA"/>
</dbReference>
<dbReference type="EMBL" id="AE009952">
    <property type="protein sequence ID" value="AAM84196.1"/>
    <property type="molecule type" value="Genomic_DNA"/>
</dbReference>
<dbReference type="EMBL" id="AE017042">
    <property type="protein sequence ID" value="AAS60775.1"/>
    <property type="molecule type" value="Genomic_DNA"/>
</dbReference>
<dbReference type="PIR" id="AF0043">
    <property type="entry name" value="AF0043"/>
</dbReference>
<dbReference type="RefSeq" id="WP_002209127.1">
    <property type="nucleotide sequence ID" value="NZ_WUCM01000014.1"/>
</dbReference>
<dbReference type="RefSeq" id="YP_002345428.1">
    <property type="nucleotide sequence ID" value="NC_003143.1"/>
</dbReference>
<dbReference type="SMR" id="Q8ZIY4"/>
<dbReference type="STRING" id="214092.YPO0350"/>
<dbReference type="PaxDb" id="214092-YPO0350"/>
<dbReference type="DNASU" id="1145555"/>
<dbReference type="EnsemblBacteria" id="AAS60775">
    <property type="protein sequence ID" value="AAS60775"/>
    <property type="gene ID" value="YP_0505"/>
</dbReference>
<dbReference type="KEGG" id="ype:YPO0350"/>
<dbReference type="KEGG" id="ypk:y0608"/>
<dbReference type="KEGG" id="ypm:YP_0505"/>
<dbReference type="PATRIC" id="fig|214092.21.peg.586"/>
<dbReference type="eggNOG" id="COG0234">
    <property type="taxonomic scope" value="Bacteria"/>
</dbReference>
<dbReference type="HOGENOM" id="CLU_132825_1_1_6"/>
<dbReference type="OMA" id="EDFLIMR"/>
<dbReference type="OrthoDB" id="9806791at2"/>
<dbReference type="Proteomes" id="UP000000815">
    <property type="component" value="Chromosome"/>
</dbReference>
<dbReference type="Proteomes" id="UP000001019">
    <property type="component" value="Chromosome"/>
</dbReference>
<dbReference type="Proteomes" id="UP000002490">
    <property type="component" value="Chromosome"/>
</dbReference>
<dbReference type="GO" id="GO:0005737">
    <property type="term" value="C:cytoplasm"/>
    <property type="evidence" value="ECO:0007669"/>
    <property type="project" value="UniProtKB-SubCell"/>
</dbReference>
<dbReference type="GO" id="GO:0005524">
    <property type="term" value="F:ATP binding"/>
    <property type="evidence" value="ECO:0007669"/>
    <property type="project" value="InterPro"/>
</dbReference>
<dbReference type="GO" id="GO:0046872">
    <property type="term" value="F:metal ion binding"/>
    <property type="evidence" value="ECO:0000318"/>
    <property type="project" value="GO_Central"/>
</dbReference>
<dbReference type="GO" id="GO:0044183">
    <property type="term" value="F:protein folding chaperone"/>
    <property type="evidence" value="ECO:0007669"/>
    <property type="project" value="InterPro"/>
</dbReference>
<dbReference type="GO" id="GO:0051087">
    <property type="term" value="F:protein-folding chaperone binding"/>
    <property type="evidence" value="ECO:0000318"/>
    <property type="project" value="GO_Central"/>
</dbReference>
<dbReference type="GO" id="GO:0051082">
    <property type="term" value="F:unfolded protein binding"/>
    <property type="evidence" value="ECO:0000318"/>
    <property type="project" value="GO_Central"/>
</dbReference>
<dbReference type="GO" id="GO:0051085">
    <property type="term" value="P:chaperone cofactor-dependent protein refolding"/>
    <property type="evidence" value="ECO:0000318"/>
    <property type="project" value="GO_Central"/>
</dbReference>
<dbReference type="CDD" id="cd00320">
    <property type="entry name" value="cpn10"/>
    <property type="match status" value="1"/>
</dbReference>
<dbReference type="FunFam" id="2.30.33.40:FF:000001">
    <property type="entry name" value="10 kDa chaperonin"/>
    <property type="match status" value="1"/>
</dbReference>
<dbReference type="Gene3D" id="2.30.33.40">
    <property type="entry name" value="GroES chaperonin"/>
    <property type="match status" value="1"/>
</dbReference>
<dbReference type="HAMAP" id="MF_00580">
    <property type="entry name" value="CH10"/>
    <property type="match status" value="1"/>
</dbReference>
<dbReference type="InterPro" id="IPR020818">
    <property type="entry name" value="Chaperonin_GroES"/>
</dbReference>
<dbReference type="InterPro" id="IPR037124">
    <property type="entry name" value="Chaperonin_GroES_sf"/>
</dbReference>
<dbReference type="InterPro" id="IPR018369">
    <property type="entry name" value="Chaprnonin_Cpn10_CS"/>
</dbReference>
<dbReference type="InterPro" id="IPR011032">
    <property type="entry name" value="GroES-like_sf"/>
</dbReference>
<dbReference type="NCBIfam" id="NF001526">
    <property type="entry name" value="PRK00364.1-1"/>
    <property type="match status" value="1"/>
</dbReference>
<dbReference type="NCBIfam" id="NF001527">
    <property type="entry name" value="PRK00364.1-2"/>
    <property type="match status" value="1"/>
</dbReference>
<dbReference type="NCBIfam" id="NF001531">
    <property type="entry name" value="PRK00364.2-2"/>
    <property type="match status" value="1"/>
</dbReference>
<dbReference type="PANTHER" id="PTHR10772">
    <property type="entry name" value="10 KDA HEAT SHOCK PROTEIN"/>
    <property type="match status" value="1"/>
</dbReference>
<dbReference type="PANTHER" id="PTHR10772:SF58">
    <property type="entry name" value="CO-CHAPERONIN GROES"/>
    <property type="match status" value="1"/>
</dbReference>
<dbReference type="Pfam" id="PF00166">
    <property type="entry name" value="Cpn10"/>
    <property type="match status" value="1"/>
</dbReference>
<dbReference type="PRINTS" id="PR00297">
    <property type="entry name" value="CHAPERONIN10"/>
</dbReference>
<dbReference type="SMART" id="SM00883">
    <property type="entry name" value="Cpn10"/>
    <property type="match status" value="1"/>
</dbReference>
<dbReference type="SUPFAM" id="SSF50129">
    <property type="entry name" value="GroES-like"/>
    <property type="match status" value="1"/>
</dbReference>
<dbReference type="PROSITE" id="PS00681">
    <property type="entry name" value="CHAPERONINS_CPN10"/>
    <property type="match status" value="1"/>
</dbReference>
<name>CH10_YERPE</name>
<reference key="1">
    <citation type="journal article" date="2001" name="Nature">
        <title>Genome sequence of Yersinia pestis, the causative agent of plague.</title>
        <authorList>
            <person name="Parkhill J."/>
            <person name="Wren B.W."/>
            <person name="Thomson N.R."/>
            <person name="Titball R.W."/>
            <person name="Holden M.T.G."/>
            <person name="Prentice M.B."/>
            <person name="Sebaihia M."/>
            <person name="James K.D."/>
            <person name="Churcher C.M."/>
            <person name="Mungall K.L."/>
            <person name="Baker S."/>
            <person name="Basham D."/>
            <person name="Bentley S.D."/>
            <person name="Brooks K."/>
            <person name="Cerdeno-Tarraga A.-M."/>
            <person name="Chillingworth T."/>
            <person name="Cronin A."/>
            <person name="Davies R.M."/>
            <person name="Davis P."/>
            <person name="Dougan G."/>
            <person name="Feltwell T."/>
            <person name="Hamlin N."/>
            <person name="Holroyd S."/>
            <person name="Jagels K."/>
            <person name="Karlyshev A.V."/>
            <person name="Leather S."/>
            <person name="Moule S."/>
            <person name="Oyston P.C.F."/>
            <person name="Quail M.A."/>
            <person name="Rutherford K.M."/>
            <person name="Simmonds M."/>
            <person name="Skelton J."/>
            <person name="Stevens K."/>
            <person name="Whitehead S."/>
            <person name="Barrell B.G."/>
        </authorList>
    </citation>
    <scope>NUCLEOTIDE SEQUENCE [LARGE SCALE GENOMIC DNA]</scope>
    <source>
        <strain>CO-92 / Biovar Orientalis</strain>
    </source>
</reference>
<reference key="2">
    <citation type="journal article" date="2002" name="J. Bacteriol.">
        <title>Genome sequence of Yersinia pestis KIM.</title>
        <authorList>
            <person name="Deng W."/>
            <person name="Burland V."/>
            <person name="Plunkett G. III"/>
            <person name="Boutin A."/>
            <person name="Mayhew G.F."/>
            <person name="Liss P."/>
            <person name="Perna N.T."/>
            <person name="Rose D.J."/>
            <person name="Mau B."/>
            <person name="Zhou S."/>
            <person name="Schwartz D.C."/>
            <person name="Fetherston J.D."/>
            <person name="Lindler L.E."/>
            <person name="Brubaker R.R."/>
            <person name="Plano G.V."/>
            <person name="Straley S.C."/>
            <person name="McDonough K.A."/>
            <person name="Nilles M.L."/>
            <person name="Matson J.S."/>
            <person name="Blattner F.R."/>
            <person name="Perry R.D."/>
        </authorList>
    </citation>
    <scope>NUCLEOTIDE SEQUENCE [LARGE SCALE GENOMIC DNA]</scope>
    <source>
        <strain>KIM10+ / Biovar Mediaevalis</strain>
    </source>
</reference>
<reference key="3">
    <citation type="journal article" date="2004" name="DNA Res.">
        <title>Complete genome sequence of Yersinia pestis strain 91001, an isolate avirulent to humans.</title>
        <authorList>
            <person name="Song Y."/>
            <person name="Tong Z."/>
            <person name="Wang J."/>
            <person name="Wang L."/>
            <person name="Guo Z."/>
            <person name="Han Y."/>
            <person name="Zhang J."/>
            <person name="Pei D."/>
            <person name="Zhou D."/>
            <person name="Qin H."/>
            <person name="Pang X."/>
            <person name="Han Y."/>
            <person name="Zhai J."/>
            <person name="Li M."/>
            <person name="Cui B."/>
            <person name="Qi Z."/>
            <person name="Jin L."/>
            <person name="Dai R."/>
            <person name="Chen F."/>
            <person name="Li S."/>
            <person name="Ye C."/>
            <person name="Du Z."/>
            <person name="Lin W."/>
            <person name="Wang J."/>
            <person name="Yu J."/>
            <person name="Yang H."/>
            <person name="Wang J."/>
            <person name="Huang P."/>
            <person name="Yang R."/>
        </authorList>
    </citation>
    <scope>NUCLEOTIDE SEQUENCE [LARGE SCALE GENOMIC DNA]</scope>
    <source>
        <strain>91001 / Biovar Mediaevalis</strain>
    </source>
</reference>
<sequence length="97" mass="10357">MKIRPLHDRVIVKRKEVESKSAGGIVLTGTAAGKSTRGEVLAVGNGRILDNGEIKPLDVKVGDVVIFNDGYGVKAEKIDNEEVLIMSESDILAIVEA</sequence>
<proteinExistence type="inferred from homology"/>
<accession>Q8ZIY4</accession>
<accession>Q0WJW0</accession>
<comment type="function">
    <text evidence="1">Together with the chaperonin GroEL, plays an essential role in assisting protein folding. The GroEL-GroES system forms a nano-cage that allows encapsulation of the non-native substrate proteins and provides a physical environment optimized to promote and accelerate protein folding. GroES binds to the apical surface of the GroEL ring, thereby capping the opening of the GroEL channel.</text>
</comment>
<comment type="subunit">
    <text evidence="1">Heptamer of 7 subunits arranged in a ring. Interacts with the chaperonin GroEL.</text>
</comment>
<comment type="subcellular location">
    <subcellularLocation>
        <location evidence="1">Cytoplasm</location>
    </subcellularLocation>
</comment>
<comment type="similarity">
    <text evidence="1 2">Belongs to the GroES chaperonin family.</text>
</comment>
<keyword id="KW-0143">Chaperone</keyword>
<keyword id="KW-0963">Cytoplasm</keyword>
<keyword id="KW-1185">Reference proteome</keyword>
<evidence type="ECO:0000255" key="1">
    <source>
        <dbReference type="HAMAP-Rule" id="MF_00580"/>
    </source>
</evidence>
<evidence type="ECO:0000305" key="2"/>
<gene>
    <name evidence="1" type="primary">groES</name>
    <name evidence="1" type="synonym">groS</name>
    <name type="synonym">mopB</name>
    <name type="ordered locus">YPO0350</name>
    <name type="ordered locus">y0608</name>
    <name type="ordered locus">YP_0505</name>
</gene>